<name>TPX_STRSA</name>
<sequence length="163" mass="17885">MTTFLGNPVTFTGKQLQVGDTAHDFSLTATDLSKKTLADFAGKKKVLSIIPSIDTGVCSTQTRRFNQELSDLDNTVVITVSVDLPFAQGKWCAAEGIENAVMLSDYFDHSFGRDYAVLINEWHLLARAVLVLDENNTVTYAEYVDNINTEPDYDAAIAAVKSL</sequence>
<protein>
    <recommendedName>
        <fullName evidence="1">Thiol peroxidase</fullName>
        <shortName evidence="1">Tpx</shortName>
        <ecNumber evidence="1">1.11.1.24</ecNumber>
    </recommendedName>
    <alternativeName>
        <fullName evidence="1">Peroxiredoxin tpx</fullName>
        <shortName evidence="1">Prx</shortName>
    </alternativeName>
    <alternativeName>
        <fullName evidence="1">Thioredoxin peroxidase</fullName>
    </alternativeName>
    <alternativeName>
        <fullName evidence="1">Thioredoxin-dependent peroxiredoxin</fullName>
    </alternativeName>
</protein>
<reference key="1">
    <citation type="journal article" date="1991" name="Infect. Immun.">
        <title>Nucleotide sequence of a gene coding for a saliva-binding protein (SsaB) from Streptococcus sanguis 12 and possible role of the protein in coaggregation with actinomyces.</title>
        <authorList>
            <person name="Ganeshkumar N."/>
            <person name="Hannam P.M."/>
            <person name="Kolenbrander P.E."/>
            <person name="McBride B.C."/>
        </authorList>
    </citation>
    <scope>NUCLEOTIDE SEQUENCE [GENOMIC DNA]</scope>
    <scope>PROTEIN SEQUENCE OF 2-41</scope>
    <source>
        <strain>12</strain>
    </source>
</reference>
<gene>
    <name evidence="1" type="primary">tpx</name>
</gene>
<proteinExistence type="evidence at protein level"/>
<evidence type="ECO:0000255" key="1">
    <source>
        <dbReference type="HAMAP-Rule" id="MF_00269"/>
    </source>
</evidence>
<evidence type="ECO:0000269" key="2">
    <source>
    </source>
</evidence>
<keyword id="KW-0049">Antioxidant</keyword>
<keyword id="KW-0903">Direct protein sequencing</keyword>
<keyword id="KW-1015">Disulfide bond</keyword>
<keyword id="KW-0560">Oxidoreductase</keyword>
<keyword id="KW-0575">Peroxidase</keyword>
<keyword id="KW-0676">Redox-active center</keyword>
<feature type="initiator methionine" description="Removed" evidence="2">
    <location>
        <position position="1"/>
    </location>
</feature>
<feature type="chain" id="PRO_0000187916" description="Thiol peroxidase">
    <location>
        <begin position="2"/>
        <end position="163"/>
    </location>
</feature>
<feature type="domain" description="Thioredoxin" evidence="1">
    <location>
        <begin position="16"/>
        <end position="162"/>
    </location>
</feature>
<feature type="active site" description="Cysteine sulfenic acid (-SOH) intermediate" evidence="1">
    <location>
        <position position="58"/>
    </location>
</feature>
<feature type="disulfide bond" description="Redox-active" evidence="1">
    <location>
        <begin position="58"/>
        <end position="92"/>
    </location>
</feature>
<comment type="function">
    <text evidence="1">Thiol-specific peroxidase that catalyzes the reduction of hydrogen peroxide and organic hydroperoxides to water and alcohols, respectively. Plays a role in cell protection against oxidative stress by detoxifying peroxides.</text>
</comment>
<comment type="catalytic activity">
    <reaction evidence="1">
        <text>a hydroperoxide + [thioredoxin]-dithiol = an alcohol + [thioredoxin]-disulfide + H2O</text>
        <dbReference type="Rhea" id="RHEA:62620"/>
        <dbReference type="Rhea" id="RHEA-COMP:10698"/>
        <dbReference type="Rhea" id="RHEA-COMP:10700"/>
        <dbReference type="ChEBI" id="CHEBI:15377"/>
        <dbReference type="ChEBI" id="CHEBI:29950"/>
        <dbReference type="ChEBI" id="CHEBI:30879"/>
        <dbReference type="ChEBI" id="CHEBI:35924"/>
        <dbReference type="ChEBI" id="CHEBI:50058"/>
        <dbReference type="EC" id="1.11.1.24"/>
    </reaction>
</comment>
<comment type="subunit">
    <text evidence="1">Homodimer.</text>
</comment>
<comment type="miscellaneous">
    <text evidence="1">The active site is a conserved redox-active cysteine residue, the peroxidatic cysteine (C(P)), which makes the nucleophilic attack on the peroxide substrate. The peroxide oxidizes the C(P)-SH to cysteine sulfenic acid (C(P)-SOH), which then reacts with another cysteine residue, the resolving cysteine (C(R)), to form a disulfide bridge. The disulfide is subsequently reduced by an appropriate electron donor to complete the catalytic cycle. In this atypical 2-Cys peroxiredoxin, C(R) is present in the same subunit to form an intramolecular disulfide. The disulfide is subsequently reduced by thioredoxin.</text>
</comment>
<comment type="similarity">
    <text evidence="1">Belongs to the peroxiredoxin family. Tpx subfamily.</text>
</comment>
<accession>P31308</accession>
<organism>
    <name type="scientific">Streptococcus sanguinis</name>
    <dbReference type="NCBI Taxonomy" id="1305"/>
    <lineage>
        <taxon>Bacteria</taxon>
        <taxon>Bacillati</taxon>
        <taxon>Bacillota</taxon>
        <taxon>Bacilli</taxon>
        <taxon>Lactobacillales</taxon>
        <taxon>Streptococcaceae</taxon>
        <taxon>Streptococcus</taxon>
    </lineage>
</organism>
<dbReference type="EC" id="1.11.1.24" evidence="1"/>
<dbReference type="EMBL" id="M63481">
    <property type="protein sequence ID" value="AAC98427.1"/>
    <property type="molecule type" value="Genomic_DNA"/>
</dbReference>
<dbReference type="PIR" id="B43583">
    <property type="entry name" value="B43583"/>
</dbReference>
<dbReference type="SMR" id="P31308"/>
<dbReference type="GO" id="GO:0008379">
    <property type="term" value="F:thioredoxin peroxidase activity"/>
    <property type="evidence" value="ECO:0007669"/>
    <property type="project" value="UniProtKB-UniRule"/>
</dbReference>
<dbReference type="CDD" id="cd03014">
    <property type="entry name" value="PRX_Atyp2cys"/>
    <property type="match status" value="1"/>
</dbReference>
<dbReference type="Gene3D" id="3.40.30.10">
    <property type="entry name" value="Glutaredoxin"/>
    <property type="match status" value="1"/>
</dbReference>
<dbReference type="HAMAP" id="MF_00269">
    <property type="entry name" value="Tpx"/>
    <property type="match status" value="1"/>
</dbReference>
<dbReference type="InterPro" id="IPR013740">
    <property type="entry name" value="Redoxin"/>
</dbReference>
<dbReference type="InterPro" id="IPR036249">
    <property type="entry name" value="Thioredoxin-like_sf"/>
</dbReference>
<dbReference type="InterPro" id="IPR013766">
    <property type="entry name" value="Thioredoxin_domain"/>
</dbReference>
<dbReference type="InterPro" id="IPR002065">
    <property type="entry name" value="TPX"/>
</dbReference>
<dbReference type="InterPro" id="IPR018219">
    <property type="entry name" value="Tpx_CS"/>
</dbReference>
<dbReference type="InterPro" id="IPR050455">
    <property type="entry name" value="Tpx_Peroxidase_subfamily"/>
</dbReference>
<dbReference type="NCBIfam" id="NF001808">
    <property type="entry name" value="PRK00522.1"/>
    <property type="match status" value="1"/>
</dbReference>
<dbReference type="PANTHER" id="PTHR43110">
    <property type="entry name" value="THIOL PEROXIDASE"/>
    <property type="match status" value="1"/>
</dbReference>
<dbReference type="PANTHER" id="PTHR43110:SF1">
    <property type="entry name" value="THIOL PEROXIDASE"/>
    <property type="match status" value="1"/>
</dbReference>
<dbReference type="Pfam" id="PF08534">
    <property type="entry name" value="Redoxin"/>
    <property type="match status" value="1"/>
</dbReference>
<dbReference type="SUPFAM" id="SSF52833">
    <property type="entry name" value="Thioredoxin-like"/>
    <property type="match status" value="1"/>
</dbReference>
<dbReference type="PROSITE" id="PS51352">
    <property type="entry name" value="THIOREDOXIN_2"/>
    <property type="match status" value="1"/>
</dbReference>
<dbReference type="PROSITE" id="PS01265">
    <property type="entry name" value="TPX"/>
    <property type="match status" value="1"/>
</dbReference>